<name>FMT_RHOPT</name>
<feature type="chain" id="PRO_1000098434" description="Methionyl-tRNA formyltransferase">
    <location>
        <begin position="1"/>
        <end position="310"/>
    </location>
</feature>
<feature type="binding site" evidence="1">
    <location>
        <begin position="111"/>
        <end position="114"/>
    </location>
    <ligand>
        <name>(6S)-5,6,7,8-tetrahydrofolate</name>
        <dbReference type="ChEBI" id="CHEBI:57453"/>
    </ligand>
</feature>
<protein>
    <recommendedName>
        <fullName evidence="1">Methionyl-tRNA formyltransferase</fullName>
        <ecNumber evidence="1">2.1.2.9</ecNumber>
    </recommendedName>
</protein>
<keyword id="KW-0648">Protein biosynthesis</keyword>
<keyword id="KW-0808">Transferase</keyword>
<gene>
    <name evidence="1" type="primary">fmt</name>
    <name type="ordered locus">Rpal_0626</name>
</gene>
<accession>B3QCH2</accession>
<proteinExistence type="inferred from homology"/>
<comment type="function">
    <text evidence="1">Attaches a formyl group to the free amino group of methionyl-tRNA(fMet). The formyl group appears to play a dual role in the initiator identity of N-formylmethionyl-tRNA by promoting its recognition by IF2 and preventing the misappropriation of this tRNA by the elongation apparatus.</text>
</comment>
<comment type="catalytic activity">
    <reaction evidence="1">
        <text>L-methionyl-tRNA(fMet) + (6R)-10-formyltetrahydrofolate = N-formyl-L-methionyl-tRNA(fMet) + (6S)-5,6,7,8-tetrahydrofolate + H(+)</text>
        <dbReference type="Rhea" id="RHEA:24380"/>
        <dbReference type="Rhea" id="RHEA-COMP:9952"/>
        <dbReference type="Rhea" id="RHEA-COMP:9953"/>
        <dbReference type="ChEBI" id="CHEBI:15378"/>
        <dbReference type="ChEBI" id="CHEBI:57453"/>
        <dbReference type="ChEBI" id="CHEBI:78530"/>
        <dbReference type="ChEBI" id="CHEBI:78844"/>
        <dbReference type="ChEBI" id="CHEBI:195366"/>
        <dbReference type="EC" id="2.1.2.9"/>
    </reaction>
</comment>
<comment type="similarity">
    <text evidence="1">Belongs to the Fmt family.</text>
</comment>
<organism>
    <name type="scientific">Rhodopseudomonas palustris (strain TIE-1)</name>
    <dbReference type="NCBI Taxonomy" id="395960"/>
    <lineage>
        <taxon>Bacteria</taxon>
        <taxon>Pseudomonadati</taxon>
        <taxon>Pseudomonadota</taxon>
        <taxon>Alphaproteobacteria</taxon>
        <taxon>Hyphomicrobiales</taxon>
        <taxon>Nitrobacteraceae</taxon>
        <taxon>Rhodopseudomonas</taxon>
    </lineage>
</organism>
<reference key="1">
    <citation type="submission" date="2008-05" db="EMBL/GenBank/DDBJ databases">
        <title>Complete sequence of Rhodopseudomonas palustris TIE-1.</title>
        <authorList>
            <consortium name="US DOE Joint Genome Institute"/>
            <person name="Lucas S."/>
            <person name="Copeland A."/>
            <person name="Lapidus A."/>
            <person name="Glavina del Rio T."/>
            <person name="Dalin E."/>
            <person name="Tice H."/>
            <person name="Pitluck S."/>
            <person name="Chain P."/>
            <person name="Malfatti S."/>
            <person name="Shin M."/>
            <person name="Vergez L."/>
            <person name="Lang D."/>
            <person name="Schmutz J."/>
            <person name="Larimer F."/>
            <person name="Land M."/>
            <person name="Hauser L."/>
            <person name="Kyrpides N."/>
            <person name="Mikhailova N."/>
            <person name="Emerson D."/>
            <person name="Newman D.K."/>
            <person name="Roden E."/>
            <person name="Richardson P."/>
        </authorList>
    </citation>
    <scope>NUCLEOTIDE SEQUENCE [LARGE SCALE GENOMIC DNA]</scope>
    <source>
        <strain>TIE-1</strain>
    </source>
</reference>
<sequence length="310" mass="33061">MPLRLVFMGTPEFAVPTLLALAAHGHDIAAVYTREPKPAGRGMKLQETPVALAAHRLQAPVLTPKTLRTDEALANFRAHEADAAVVVAYGMILPQAILDAPELGCYNLHGSLLPRWRGAAPLNRAIMAGDAETGVMVMKMDAGLDTGDVAMAERIAITDAMTVTDVHDQLARLGADLMVRAMAALERGGLQLTKQSEDGVTYAAKIDKAEAKIDFAKPAWAVLRHIHGLSPFPGAWCELPIEGQPVRIKVLRCAIADGRGEPGEVIDDHLTIACGDGAIRVSQLQRAGKQPMTAEEFLRGTPIAKGVRVG</sequence>
<dbReference type="EC" id="2.1.2.9" evidence="1"/>
<dbReference type="EMBL" id="CP001096">
    <property type="protein sequence ID" value="ACE99185.1"/>
    <property type="molecule type" value="Genomic_DNA"/>
</dbReference>
<dbReference type="RefSeq" id="WP_012494284.1">
    <property type="nucleotide sequence ID" value="NC_011004.1"/>
</dbReference>
<dbReference type="SMR" id="B3QCH2"/>
<dbReference type="KEGG" id="rpt:Rpal_0626"/>
<dbReference type="HOGENOM" id="CLU_033347_1_2_5"/>
<dbReference type="OrthoDB" id="9802815at2"/>
<dbReference type="Proteomes" id="UP000001725">
    <property type="component" value="Chromosome"/>
</dbReference>
<dbReference type="GO" id="GO:0005829">
    <property type="term" value="C:cytosol"/>
    <property type="evidence" value="ECO:0007669"/>
    <property type="project" value="TreeGrafter"/>
</dbReference>
<dbReference type="GO" id="GO:0004479">
    <property type="term" value="F:methionyl-tRNA formyltransferase activity"/>
    <property type="evidence" value="ECO:0007669"/>
    <property type="project" value="UniProtKB-UniRule"/>
</dbReference>
<dbReference type="CDD" id="cd08646">
    <property type="entry name" value="FMT_core_Met-tRNA-FMT_N"/>
    <property type="match status" value="1"/>
</dbReference>
<dbReference type="CDD" id="cd08704">
    <property type="entry name" value="Met_tRNA_FMT_C"/>
    <property type="match status" value="1"/>
</dbReference>
<dbReference type="FunFam" id="3.40.50.12230:FF:000001">
    <property type="entry name" value="Methionyl-tRNA formyltransferase"/>
    <property type="match status" value="1"/>
</dbReference>
<dbReference type="Gene3D" id="3.40.50.12230">
    <property type="match status" value="1"/>
</dbReference>
<dbReference type="HAMAP" id="MF_00182">
    <property type="entry name" value="Formyl_trans"/>
    <property type="match status" value="1"/>
</dbReference>
<dbReference type="InterPro" id="IPR005794">
    <property type="entry name" value="Fmt"/>
</dbReference>
<dbReference type="InterPro" id="IPR005793">
    <property type="entry name" value="Formyl_trans_C"/>
</dbReference>
<dbReference type="InterPro" id="IPR002376">
    <property type="entry name" value="Formyl_transf_N"/>
</dbReference>
<dbReference type="InterPro" id="IPR036477">
    <property type="entry name" value="Formyl_transf_N_sf"/>
</dbReference>
<dbReference type="InterPro" id="IPR011034">
    <property type="entry name" value="Formyl_transferase-like_C_sf"/>
</dbReference>
<dbReference type="InterPro" id="IPR001555">
    <property type="entry name" value="GART_AS"/>
</dbReference>
<dbReference type="InterPro" id="IPR044135">
    <property type="entry name" value="Met-tRNA-FMT_C"/>
</dbReference>
<dbReference type="InterPro" id="IPR041711">
    <property type="entry name" value="Met-tRNA-FMT_N"/>
</dbReference>
<dbReference type="NCBIfam" id="TIGR00460">
    <property type="entry name" value="fmt"/>
    <property type="match status" value="1"/>
</dbReference>
<dbReference type="PANTHER" id="PTHR11138">
    <property type="entry name" value="METHIONYL-TRNA FORMYLTRANSFERASE"/>
    <property type="match status" value="1"/>
</dbReference>
<dbReference type="PANTHER" id="PTHR11138:SF5">
    <property type="entry name" value="METHIONYL-TRNA FORMYLTRANSFERASE, MITOCHONDRIAL"/>
    <property type="match status" value="1"/>
</dbReference>
<dbReference type="Pfam" id="PF02911">
    <property type="entry name" value="Formyl_trans_C"/>
    <property type="match status" value="1"/>
</dbReference>
<dbReference type="Pfam" id="PF00551">
    <property type="entry name" value="Formyl_trans_N"/>
    <property type="match status" value="1"/>
</dbReference>
<dbReference type="SUPFAM" id="SSF50486">
    <property type="entry name" value="FMT C-terminal domain-like"/>
    <property type="match status" value="1"/>
</dbReference>
<dbReference type="SUPFAM" id="SSF53328">
    <property type="entry name" value="Formyltransferase"/>
    <property type="match status" value="1"/>
</dbReference>
<dbReference type="PROSITE" id="PS00373">
    <property type="entry name" value="GART"/>
    <property type="match status" value="1"/>
</dbReference>
<evidence type="ECO:0000255" key="1">
    <source>
        <dbReference type="HAMAP-Rule" id="MF_00182"/>
    </source>
</evidence>